<protein>
    <recommendedName>
        <fullName evidence="1">2-aminoethylphosphonate--pyruvate transaminase</fullName>
        <ecNumber evidence="1">2.6.1.37</ecNumber>
    </recommendedName>
    <alternativeName>
        <fullName evidence="1">2-aminoethylphosphonate aminotransferase</fullName>
    </alternativeName>
    <alternativeName>
        <fullName evidence="1">AEP transaminase</fullName>
        <shortName evidence="1">AEPT</shortName>
    </alternativeName>
</protein>
<proteinExistence type="inferred from homology"/>
<feature type="chain" id="PRO_1000144846" description="2-aminoethylphosphonate--pyruvate transaminase">
    <location>
        <begin position="1"/>
        <end position="365"/>
    </location>
</feature>
<feature type="modified residue" description="N6-(pyridoxal phosphate)lysine" evidence="1">
    <location>
        <position position="194"/>
    </location>
</feature>
<sequence>MNENHYLLLTPGPLTTTKSVKEVMLYDWCTWDVEYNTMVQEVRAKLVSLATKEEEKYTTVLMQGSGTFSVEAVIGSVIPANGKLLVCTNGAYGKRIVQMAEMLQIDVVVSQTEEWEPTNIVEVEKLLQEDKEITHIAVVHCETTTGIINPIVDVCKLGKQYGKVTIVDAMSSFGGIEIDIADLQIDFLISSANKCIQGVPGFGFVIAKRDELLKCKGKGRSLSLDLYDQWETMEKQNGKWRFTSPTHVVHAFYQALLELEKEGGVRARYNRYYNNQKLLVNRMGEIGFKPLVDEKYQSPIITSFIYPKEGFEFQQLYNELKRYGFVIYPGKISKVDTFRIGNIGDVHEEDINRLVDSIAKGAVIG</sequence>
<accession>B7IN19</accession>
<name>PHNW_BACC2</name>
<dbReference type="EC" id="2.6.1.37" evidence="1"/>
<dbReference type="EMBL" id="CP001186">
    <property type="protein sequence ID" value="ACK98139.1"/>
    <property type="molecule type" value="Genomic_DNA"/>
</dbReference>
<dbReference type="RefSeq" id="WP_001004779.1">
    <property type="nucleotide sequence ID" value="NC_011772.1"/>
</dbReference>
<dbReference type="SMR" id="B7IN19"/>
<dbReference type="KEGG" id="bcg:BCG9842_B3966"/>
<dbReference type="HOGENOM" id="CLU_027686_3_1_9"/>
<dbReference type="Proteomes" id="UP000006744">
    <property type="component" value="Chromosome"/>
</dbReference>
<dbReference type="GO" id="GO:0047304">
    <property type="term" value="F:2-aminoethylphosphonate-pyruvate transaminase activity"/>
    <property type="evidence" value="ECO:0007669"/>
    <property type="project" value="UniProtKB-UniRule"/>
</dbReference>
<dbReference type="GO" id="GO:0019700">
    <property type="term" value="P:organic phosphonate catabolic process"/>
    <property type="evidence" value="ECO:0007669"/>
    <property type="project" value="InterPro"/>
</dbReference>
<dbReference type="Gene3D" id="3.90.1150.10">
    <property type="entry name" value="Aspartate Aminotransferase, domain 1"/>
    <property type="match status" value="1"/>
</dbReference>
<dbReference type="Gene3D" id="3.40.640.10">
    <property type="entry name" value="Type I PLP-dependent aspartate aminotransferase-like (Major domain)"/>
    <property type="match status" value="1"/>
</dbReference>
<dbReference type="HAMAP" id="MF_01376">
    <property type="entry name" value="PhnW_aminotrans_5"/>
    <property type="match status" value="1"/>
</dbReference>
<dbReference type="InterPro" id="IPR000192">
    <property type="entry name" value="Aminotrans_V_dom"/>
</dbReference>
<dbReference type="InterPro" id="IPR012703">
    <property type="entry name" value="NH2EtPonate_pyrv_transaminase"/>
</dbReference>
<dbReference type="InterPro" id="IPR015424">
    <property type="entry name" value="PyrdxlP-dep_Trfase"/>
</dbReference>
<dbReference type="InterPro" id="IPR015421">
    <property type="entry name" value="PyrdxlP-dep_Trfase_major"/>
</dbReference>
<dbReference type="InterPro" id="IPR015422">
    <property type="entry name" value="PyrdxlP-dep_Trfase_small"/>
</dbReference>
<dbReference type="InterPro" id="IPR024169">
    <property type="entry name" value="SP_NH2Trfase/AEP_transaminase"/>
</dbReference>
<dbReference type="NCBIfam" id="TIGR03301">
    <property type="entry name" value="PhnW-AepZ"/>
    <property type="match status" value="1"/>
</dbReference>
<dbReference type="NCBIfam" id="NF010006">
    <property type="entry name" value="PRK13479.1"/>
    <property type="match status" value="1"/>
</dbReference>
<dbReference type="NCBIfam" id="TIGR02326">
    <property type="entry name" value="transamin_PhnW"/>
    <property type="match status" value="1"/>
</dbReference>
<dbReference type="PANTHER" id="PTHR42778">
    <property type="entry name" value="2-AMINOETHYLPHOSPHONATE--PYRUVATE TRANSAMINASE"/>
    <property type="match status" value="1"/>
</dbReference>
<dbReference type="PANTHER" id="PTHR42778:SF1">
    <property type="entry name" value="2-AMINOETHYLPHOSPHONATE--PYRUVATE TRANSAMINASE"/>
    <property type="match status" value="1"/>
</dbReference>
<dbReference type="Pfam" id="PF00266">
    <property type="entry name" value="Aminotran_5"/>
    <property type="match status" value="1"/>
</dbReference>
<dbReference type="PIRSF" id="PIRSF000524">
    <property type="entry name" value="SPT"/>
    <property type="match status" value="1"/>
</dbReference>
<dbReference type="SUPFAM" id="SSF53383">
    <property type="entry name" value="PLP-dependent transferases"/>
    <property type="match status" value="1"/>
</dbReference>
<keyword id="KW-0032">Aminotransferase</keyword>
<keyword id="KW-0663">Pyridoxal phosphate</keyword>
<keyword id="KW-0670">Pyruvate</keyword>
<keyword id="KW-0808">Transferase</keyword>
<reference key="1">
    <citation type="submission" date="2008-10" db="EMBL/GenBank/DDBJ databases">
        <title>Genome sequence of Bacillus cereus G9842.</title>
        <authorList>
            <person name="Dodson R.J."/>
            <person name="Durkin A.S."/>
            <person name="Rosovitz M.J."/>
            <person name="Rasko D.A."/>
            <person name="Hoffmaster A."/>
            <person name="Ravel J."/>
            <person name="Sutton G."/>
        </authorList>
    </citation>
    <scope>NUCLEOTIDE SEQUENCE [LARGE SCALE GENOMIC DNA]</scope>
    <source>
        <strain>G9842</strain>
    </source>
</reference>
<evidence type="ECO:0000255" key="1">
    <source>
        <dbReference type="HAMAP-Rule" id="MF_01376"/>
    </source>
</evidence>
<comment type="function">
    <text evidence="1">Involved in phosphonate degradation.</text>
</comment>
<comment type="catalytic activity">
    <reaction evidence="1">
        <text>(2-aminoethyl)phosphonate + pyruvate = phosphonoacetaldehyde + L-alanine</text>
        <dbReference type="Rhea" id="RHEA:17021"/>
        <dbReference type="ChEBI" id="CHEBI:15361"/>
        <dbReference type="ChEBI" id="CHEBI:57418"/>
        <dbReference type="ChEBI" id="CHEBI:57972"/>
        <dbReference type="ChEBI" id="CHEBI:58383"/>
        <dbReference type="EC" id="2.6.1.37"/>
    </reaction>
</comment>
<comment type="cofactor">
    <cofactor evidence="1">
        <name>pyridoxal 5'-phosphate</name>
        <dbReference type="ChEBI" id="CHEBI:597326"/>
    </cofactor>
</comment>
<comment type="subunit">
    <text evidence="1">Homodimer.</text>
</comment>
<comment type="similarity">
    <text evidence="1">Belongs to the class-V pyridoxal-phosphate-dependent aminotransferase family. PhnW subfamily.</text>
</comment>
<organism>
    <name type="scientific">Bacillus cereus (strain G9842)</name>
    <dbReference type="NCBI Taxonomy" id="405531"/>
    <lineage>
        <taxon>Bacteria</taxon>
        <taxon>Bacillati</taxon>
        <taxon>Bacillota</taxon>
        <taxon>Bacilli</taxon>
        <taxon>Bacillales</taxon>
        <taxon>Bacillaceae</taxon>
        <taxon>Bacillus</taxon>
        <taxon>Bacillus cereus group</taxon>
    </lineage>
</organism>
<gene>
    <name evidence="1" type="primary">phnW</name>
    <name type="ordered locus">BCG9842_B3966</name>
</gene>